<comment type="function">
    <text evidence="1">Catalyzes the stereoinversion of LL-2,6-diaminopimelate (L,L-DAP) to meso-diaminopimelate (meso-DAP), a precursor of L-lysine and an essential component of the bacterial peptidoglycan.</text>
</comment>
<comment type="catalytic activity">
    <reaction evidence="1">
        <text>(2S,6S)-2,6-diaminopimelate = meso-2,6-diaminopimelate</text>
        <dbReference type="Rhea" id="RHEA:15393"/>
        <dbReference type="ChEBI" id="CHEBI:57609"/>
        <dbReference type="ChEBI" id="CHEBI:57791"/>
        <dbReference type="EC" id="5.1.1.7"/>
    </reaction>
</comment>
<comment type="pathway">
    <text evidence="1">Amino-acid biosynthesis; L-lysine biosynthesis via DAP pathway; DL-2,6-diaminopimelate from LL-2,6-diaminopimelate: step 1/1.</text>
</comment>
<comment type="subunit">
    <text evidence="1">Homodimer.</text>
</comment>
<comment type="subcellular location">
    <subcellularLocation>
        <location evidence="1">Cytoplasm</location>
    </subcellularLocation>
</comment>
<comment type="similarity">
    <text evidence="1">Belongs to the diaminopimelate epimerase family.</text>
</comment>
<organism>
    <name type="scientific">Rickettsia bellii (strain RML369-C)</name>
    <dbReference type="NCBI Taxonomy" id="336407"/>
    <lineage>
        <taxon>Bacteria</taxon>
        <taxon>Pseudomonadati</taxon>
        <taxon>Pseudomonadota</taxon>
        <taxon>Alphaproteobacteria</taxon>
        <taxon>Rickettsiales</taxon>
        <taxon>Rickettsiaceae</taxon>
        <taxon>Rickettsieae</taxon>
        <taxon>Rickettsia</taxon>
        <taxon>belli group</taxon>
    </lineage>
</organism>
<protein>
    <recommendedName>
        <fullName evidence="1">Diaminopimelate epimerase</fullName>
        <shortName evidence="1">DAP epimerase</shortName>
        <ecNumber evidence="1">5.1.1.7</ecNumber>
    </recommendedName>
    <alternativeName>
        <fullName evidence="1">PLP-independent amino acid racemase</fullName>
    </alternativeName>
</protein>
<dbReference type="EC" id="5.1.1.7" evidence="1"/>
<dbReference type="EMBL" id="CP000087">
    <property type="protein sequence ID" value="ABE04733.1"/>
    <property type="molecule type" value="Genomic_DNA"/>
</dbReference>
<dbReference type="RefSeq" id="WP_011477321.1">
    <property type="nucleotide sequence ID" value="NC_007940.1"/>
</dbReference>
<dbReference type="SMR" id="Q1RIT1"/>
<dbReference type="KEGG" id="rbe:RBE_0652"/>
<dbReference type="eggNOG" id="COG0253">
    <property type="taxonomic scope" value="Bacteria"/>
</dbReference>
<dbReference type="HOGENOM" id="CLU_053306_1_0_5"/>
<dbReference type="OrthoDB" id="9805408at2"/>
<dbReference type="UniPathway" id="UPA00034">
    <property type="reaction ID" value="UER00025"/>
</dbReference>
<dbReference type="Proteomes" id="UP000001951">
    <property type="component" value="Chromosome"/>
</dbReference>
<dbReference type="GO" id="GO:0005829">
    <property type="term" value="C:cytosol"/>
    <property type="evidence" value="ECO:0007669"/>
    <property type="project" value="TreeGrafter"/>
</dbReference>
<dbReference type="GO" id="GO:0008837">
    <property type="term" value="F:diaminopimelate epimerase activity"/>
    <property type="evidence" value="ECO:0007669"/>
    <property type="project" value="UniProtKB-UniRule"/>
</dbReference>
<dbReference type="GO" id="GO:0009089">
    <property type="term" value="P:lysine biosynthetic process via diaminopimelate"/>
    <property type="evidence" value="ECO:0007669"/>
    <property type="project" value="UniProtKB-UniRule"/>
</dbReference>
<dbReference type="Gene3D" id="3.10.310.10">
    <property type="entry name" value="Diaminopimelate Epimerase, Chain A, domain 1"/>
    <property type="match status" value="2"/>
</dbReference>
<dbReference type="HAMAP" id="MF_00197">
    <property type="entry name" value="DAP_epimerase"/>
    <property type="match status" value="1"/>
</dbReference>
<dbReference type="InterPro" id="IPR018510">
    <property type="entry name" value="DAP_epimerase_AS"/>
</dbReference>
<dbReference type="InterPro" id="IPR001653">
    <property type="entry name" value="DAP_epimerase_DapF"/>
</dbReference>
<dbReference type="NCBIfam" id="TIGR00652">
    <property type="entry name" value="DapF"/>
    <property type="match status" value="1"/>
</dbReference>
<dbReference type="PANTHER" id="PTHR31689:SF0">
    <property type="entry name" value="DIAMINOPIMELATE EPIMERASE"/>
    <property type="match status" value="1"/>
</dbReference>
<dbReference type="PANTHER" id="PTHR31689">
    <property type="entry name" value="DIAMINOPIMELATE EPIMERASE, CHLOROPLASTIC"/>
    <property type="match status" value="1"/>
</dbReference>
<dbReference type="Pfam" id="PF01678">
    <property type="entry name" value="DAP_epimerase"/>
    <property type="match status" value="2"/>
</dbReference>
<dbReference type="SUPFAM" id="SSF54506">
    <property type="entry name" value="Diaminopimelate epimerase-like"/>
    <property type="match status" value="2"/>
</dbReference>
<dbReference type="PROSITE" id="PS01326">
    <property type="entry name" value="DAP_EPIMERASE"/>
    <property type="match status" value="1"/>
</dbReference>
<name>DAPF_RICBR</name>
<gene>
    <name evidence="1" type="primary">dapF</name>
    <name type="ordered locus">RBE_0652</name>
</gene>
<reference key="1">
    <citation type="journal article" date="2006" name="PLoS Genet.">
        <title>Genome sequence of Rickettsia bellii illuminates the role of amoebae in gene exchanges between intracellular pathogens.</title>
        <authorList>
            <person name="Ogata H."/>
            <person name="La Scola B."/>
            <person name="Audic S."/>
            <person name="Renesto P."/>
            <person name="Blanc G."/>
            <person name="Robert C."/>
            <person name="Fournier P.-E."/>
            <person name="Claverie J.-M."/>
            <person name="Raoult D."/>
        </authorList>
    </citation>
    <scope>NUCLEOTIDE SEQUENCE [LARGE SCALE GENOMIC DNA]</scope>
    <source>
        <strain>RML369-C</strain>
    </source>
</reference>
<proteinExistence type="inferred from homology"/>
<evidence type="ECO:0000255" key="1">
    <source>
        <dbReference type="HAMAP-Rule" id="MF_00197"/>
    </source>
</evidence>
<accession>Q1RIT1</accession>
<sequence length="269" mass="29769">MSSKINFVKMHGLGNDFVIINKKDLTGTYDLSQLAKSMAKRHLGIGCDQFIIYEEQNDSYEMIIYNIDGSSAKLCGNATRCLAKLIYLDTGKKDITVVVGNKKLLCHVIDENNISVNVGGVSFNESWMPSRDKIWEFAERYMIDLKETICVDVGNPHLVIFSKLELQDQKIVGEKLQDKALFADGVNVNFAEVRDNKIYLSVWERGSGLTLACGSGACGSFAAGLKLGFIHSPCEVVFKHGSLIMKEENGNIIMQGPASLVAKGMYYCE</sequence>
<feature type="chain" id="PRO_0000278044" description="Diaminopimelate epimerase">
    <location>
        <begin position="1"/>
        <end position="269"/>
    </location>
</feature>
<feature type="active site" description="Proton donor" evidence="1">
    <location>
        <position position="75"/>
    </location>
</feature>
<feature type="active site" description="Proton acceptor" evidence="1">
    <location>
        <position position="213"/>
    </location>
</feature>
<feature type="binding site" evidence="1">
    <location>
        <position position="15"/>
    </location>
    <ligand>
        <name>substrate</name>
    </ligand>
</feature>
<feature type="binding site" evidence="1">
    <location>
        <position position="49"/>
    </location>
    <ligand>
        <name>substrate</name>
    </ligand>
</feature>
<feature type="binding site" evidence="1">
    <location>
        <position position="66"/>
    </location>
    <ligand>
        <name>substrate</name>
    </ligand>
</feature>
<feature type="binding site" evidence="1">
    <location>
        <begin position="76"/>
        <end position="77"/>
    </location>
    <ligand>
        <name>substrate</name>
    </ligand>
</feature>
<feature type="binding site" evidence="1">
    <location>
        <position position="155"/>
    </location>
    <ligand>
        <name>substrate</name>
    </ligand>
</feature>
<feature type="binding site" evidence="1">
    <location>
        <position position="187"/>
    </location>
    <ligand>
        <name>substrate</name>
    </ligand>
</feature>
<feature type="binding site" evidence="1">
    <location>
        <begin position="204"/>
        <end position="205"/>
    </location>
    <ligand>
        <name>substrate</name>
    </ligand>
</feature>
<feature type="binding site" evidence="1">
    <location>
        <begin position="214"/>
        <end position="215"/>
    </location>
    <ligand>
        <name>substrate</name>
    </ligand>
</feature>
<feature type="site" description="Could be important to modulate the pK values of the two catalytic cysteine residues" evidence="1">
    <location>
        <position position="157"/>
    </location>
</feature>
<feature type="site" description="Could be important to modulate the pK values of the two catalytic cysteine residues" evidence="1">
    <location>
        <position position="204"/>
    </location>
</feature>
<keyword id="KW-0028">Amino-acid biosynthesis</keyword>
<keyword id="KW-0963">Cytoplasm</keyword>
<keyword id="KW-0413">Isomerase</keyword>
<keyword id="KW-0457">Lysine biosynthesis</keyword>